<keyword id="KW-0378">Hydrolase</keyword>
<keyword id="KW-0460">Magnesium</keyword>
<keyword id="KW-0479">Metal-binding</keyword>
<keyword id="KW-0546">Nucleotide metabolism</keyword>
<keyword id="KW-0547">Nucleotide-binding</keyword>
<proteinExistence type="inferred from homology"/>
<feature type="chain" id="PRO_0000178150" description="dITP/XTP pyrophosphatase">
    <location>
        <begin position="1"/>
        <end position="206"/>
    </location>
</feature>
<feature type="active site" description="Proton acceptor" evidence="1">
    <location>
        <position position="70"/>
    </location>
</feature>
<feature type="binding site" evidence="1">
    <location>
        <begin position="7"/>
        <end position="12"/>
    </location>
    <ligand>
        <name>substrate</name>
    </ligand>
</feature>
<feature type="binding site" evidence="1">
    <location>
        <position position="70"/>
    </location>
    <ligand>
        <name>Mg(2+)</name>
        <dbReference type="ChEBI" id="CHEBI:18420"/>
    </ligand>
</feature>
<feature type="binding site" evidence="1">
    <location>
        <position position="71"/>
    </location>
    <ligand>
        <name>substrate</name>
    </ligand>
</feature>
<feature type="binding site" evidence="1">
    <location>
        <begin position="154"/>
        <end position="157"/>
    </location>
    <ligand>
        <name>substrate</name>
    </ligand>
</feature>
<feature type="binding site" evidence="1">
    <location>
        <position position="177"/>
    </location>
    <ligand>
        <name>substrate</name>
    </ligand>
</feature>
<feature type="binding site" evidence="1">
    <location>
        <begin position="182"/>
        <end position="183"/>
    </location>
    <ligand>
        <name>substrate</name>
    </ligand>
</feature>
<feature type="sequence conflict" description="In Ref. 1; AAD18913." evidence="2" ref="1">
    <original>E</original>
    <variation>G</variation>
    <location>
        <position position="44"/>
    </location>
</feature>
<name>IXTPA_CHLPN</name>
<gene>
    <name type="ordered locus">CPn_0775</name>
    <name type="ordered locus">CP_1097</name>
    <name type="ordered locus">CPj0775</name>
    <name type="ordered locus">CpB0802</name>
</gene>
<accession>Q9Z7D1</accession>
<accession>Q9JS41</accession>
<evidence type="ECO:0000255" key="1">
    <source>
        <dbReference type="HAMAP-Rule" id="MF_01405"/>
    </source>
</evidence>
<evidence type="ECO:0000305" key="2"/>
<reference key="1">
    <citation type="journal article" date="1999" name="Nat. Genet.">
        <title>Comparative genomes of Chlamydia pneumoniae and C. trachomatis.</title>
        <authorList>
            <person name="Kalman S."/>
            <person name="Mitchell W.P."/>
            <person name="Marathe R."/>
            <person name="Lammel C.J."/>
            <person name="Fan J."/>
            <person name="Hyman R.W."/>
            <person name="Olinger L."/>
            <person name="Grimwood J."/>
            <person name="Davis R.W."/>
            <person name="Stephens R.S."/>
        </authorList>
    </citation>
    <scope>NUCLEOTIDE SEQUENCE [LARGE SCALE GENOMIC DNA]</scope>
    <source>
        <strain>CWL029</strain>
    </source>
</reference>
<reference key="2">
    <citation type="journal article" date="2000" name="Nucleic Acids Res.">
        <title>Genome sequences of Chlamydia trachomatis MoPn and Chlamydia pneumoniae AR39.</title>
        <authorList>
            <person name="Read T.D."/>
            <person name="Brunham R.C."/>
            <person name="Shen C."/>
            <person name="Gill S.R."/>
            <person name="Heidelberg J.F."/>
            <person name="White O."/>
            <person name="Hickey E.K."/>
            <person name="Peterson J.D."/>
            <person name="Utterback T.R."/>
            <person name="Berry K.J."/>
            <person name="Bass S."/>
            <person name="Linher K.D."/>
            <person name="Weidman J.F."/>
            <person name="Khouri H.M."/>
            <person name="Craven B."/>
            <person name="Bowman C."/>
            <person name="Dodson R.J."/>
            <person name="Gwinn M.L."/>
            <person name="Nelson W.C."/>
            <person name="DeBoy R.T."/>
            <person name="Kolonay J.F."/>
            <person name="McClarty G."/>
            <person name="Salzberg S.L."/>
            <person name="Eisen J.A."/>
            <person name="Fraser C.M."/>
        </authorList>
    </citation>
    <scope>NUCLEOTIDE SEQUENCE [LARGE SCALE GENOMIC DNA]</scope>
    <source>
        <strain>AR39</strain>
    </source>
</reference>
<reference key="3">
    <citation type="journal article" date="2000" name="Nucleic Acids Res.">
        <title>Comparison of whole genome sequences of Chlamydia pneumoniae J138 from Japan and CWL029 from USA.</title>
        <authorList>
            <person name="Shirai M."/>
            <person name="Hirakawa H."/>
            <person name="Kimoto M."/>
            <person name="Tabuchi M."/>
            <person name="Kishi F."/>
            <person name="Ouchi K."/>
            <person name="Shiba T."/>
            <person name="Ishii K."/>
            <person name="Hattori M."/>
            <person name="Kuhara S."/>
            <person name="Nakazawa T."/>
        </authorList>
    </citation>
    <scope>NUCLEOTIDE SEQUENCE [LARGE SCALE GENOMIC DNA]</scope>
    <source>
        <strain>J138</strain>
    </source>
</reference>
<reference key="4">
    <citation type="submission" date="2002-05" db="EMBL/GenBank/DDBJ databases">
        <title>The genome sequence of Chlamydia pneumoniae TW183 and comparison with other Chlamydia strains based on whole genome sequence analysis.</title>
        <authorList>
            <person name="Geng M.M."/>
            <person name="Schuhmacher A."/>
            <person name="Muehldorfer I."/>
            <person name="Bensch K.W."/>
            <person name="Schaefer K.P."/>
            <person name="Schneider S."/>
            <person name="Pohl T."/>
            <person name="Essig A."/>
            <person name="Marre R."/>
            <person name="Melchers K."/>
        </authorList>
    </citation>
    <scope>NUCLEOTIDE SEQUENCE [LARGE SCALE GENOMIC DNA]</scope>
    <source>
        <strain>TW-183</strain>
    </source>
</reference>
<organism>
    <name type="scientific">Chlamydia pneumoniae</name>
    <name type="common">Chlamydophila pneumoniae</name>
    <dbReference type="NCBI Taxonomy" id="83558"/>
    <lineage>
        <taxon>Bacteria</taxon>
        <taxon>Pseudomonadati</taxon>
        <taxon>Chlamydiota</taxon>
        <taxon>Chlamydiia</taxon>
        <taxon>Chlamydiales</taxon>
        <taxon>Chlamydiaceae</taxon>
        <taxon>Chlamydia/Chlamydophila group</taxon>
        <taxon>Chlamydia</taxon>
    </lineage>
</organism>
<sequence>MKIVIASSHGYKIRETKTFLKRLGDFDIFSLSDFPDYKLPQEQEDSITANALTKGIHAANHLGCWVIADDTMLRVPALNGLPGPLSANFAGVGAYDKDHRKKLLDLMSSLESLVDRSAYFECCVVLVSPNQEIFKTYGICEGYISHQEKGSSGFGYDPIFVKYDYKQTFAELSEDVKNQVSHRAKALQKLAPHLQSLFEKHLLTRD</sequence>
<protein>
    <recommendedName>
        <fullName evidence="1">dITP/XTP pyrophosphatase</fullName>
        <ecNumber evidence="1">3.6.1.66</ecNumber>
    </recommendedName>
    <alternativeName>
        <fullName evidence="1">Non-canonical purine NTP pyrophosphatase</fullName>
    </alternativeName>
    <alternativeName>
        <fullName evidence="1">Non-standard purine NTP pyrophosphatase</fullName>
    </alternativeName>
    <alternativeName>
        <fullName evidence="1">Nucleoside-triphosphate diphosphatase</fullName>
    </alternativeName>
    <alternativeName>
        <fullName evidence="1">Nucleoside-triphosphate pyrophosphatase</fullName>
        <shortName evidence="1">NTPase</shortName>
    </alternativeName>
</protein>
<comment type="function">
    <text evidence="1">Pyrophosphatase that catalyzes the hydrolysis of nucleoside triphosphates to their monophosphate derivatives, with a high preference for the non-canonical purine nucleotides XTP (xanthosine triphosphate), dITP (deoxyinosine triphosphate) and ITP. Seems to function as a house-cleaning enzyme that removes non-canonical purine nucleotides from the nucleotide pool, thus preventing their incorporation into DNA/RNA and avoiding chromosomal lesions.</text>
</comment>
<comment type="catalytic activity">
    <reaction evidence="1">
        <text>XTP + H2O = XMP + diphosphate + H(+)</text>
        <dbReference type="Rhea" id="RHEA:28610"/>
        <dbReference type="ChEBI" id="CHEBI:15377"/>
        <dbReference type="ChEBI" id="CHEBI:15378"/>
        <dbReference type="ChEBI" id="CHEBI:33019"/>
        <dbReference type="ChEBI" id="CHEBI:57464"/>
        <dbReference type="ChEBI" id="CHEBI:61314"/>
        <dbReference type="EC" id="3.6.1.66"/>
    </reaction>
</comment>
<comment type="catalytic activity">
    <reaction evidence="1">
        <text>dITP + H2O = dIMP + diphosphate + H(+)</text>
        <dbReference type="Rhea" id="RHEA:28342"/>
        <dbReference type="ChEBI" id="CHEBI:15377"/>
        <dbReference type="ChEBI" id="CHEBI:15378"/>
        <dbReference type="ChEBI" id="CHEBI:33019"/>
        <dbReference type="ChEBI" id="CHEBI:61194"/>
        <dbReference type="ChEBI" id="CHEBI:61382"/>
        <dbReference type="EC" id="3.6.1.66"/>
    </reaction>
</comment>
<comment type="catalytic activity">
    <reaction evidence="1">
        <text>ITP + H2O = IMP + diphosphate + H(+)</text>
        <dbReference type="Rhea" id="RHEA:29399"/>
        <dbReference type="ChEBI" id="CHEBI:15377"/>
        <dbReference type="ChEBI" id="CHEBI:15378"/>
        <dbReference type="ChEBI" id="CHEBI:33019"/>
        <dbReference type="ChEBI" id="CHEBI:58053"/>
        <dbReference type="ChEBI" id="CHEBI:61402"/>
        <dbReference type="EC" id="3.6.1.66"/>
    </reaction>
</comment>
<comment type="cofactor">
    <cofactor evidence="1">
        <name>Mg(2+)</name>
        <dbReference type="ChEBI" id="CHEBI:18420"/>
    </cofactor>
    <text evidence="1">Binds 1 Mg(2+) ion per subunit.</text>
</comment>
<comment type="subunit">
    <text evidence="1">Homodimer.</text>
</comment>
<comment type="similarity">
    <text evidence="1">Belongs to the HAM1 NTPase family.</text>
</comment>
<dbReference type="EC" id="3.6.1.66" evidence="1"/>
<dbReference type="EMBL" id="AE001363">
    <property type="protein sequence ID" value="AAD18913.1"/>
    <property type="molecule type" value="Genomic_DNA"/>
</dbReference>
<dbReference type="EMBL" id="AE002161">
    <property type="protein sequence ID" value="AAF73731.1"/>
    <property type="molecule type" value="Genomic_DNA"/>
</dbReference>
<dbReference type="EMBL" id="BA000008">
    <property type="protein sequence ID" value="BAA98983.1"/>
    <property type="molecule type" value="Genomic_DNA"/>
</dbReference>
<dbReference type="EMBL" id="AE009440">
    <property type="protein sequence ID" value="AAP98732.1"/>
    <property type="molecule type" value="Genomic_DNA"/>
</dbReference>
<dbReference type="PIR" id="B72036">
    <property type="entry name" value="B72036"/>
</dbReference>
<dbReference type="PIR" id="E86587">
    <property type="entry name" value="E86587"/>
</dbReference>
<dbReference type="RefSeq" id="NP_224970.1">
    <property type="nucleotide sequence ID" value="NC_000922.1"/>
</dbReference>
<dbReference type="SMR" id="Q9Z7D1"/>
<dbReference type="STRING" id="406984.CPK_ORF00180"/>
<dbReference type="GeneID" id="45050830"/>
<dbReference type="KEGG" id="cpa:CP_1097"/>
<dbReference type="KEGG" id="cpj:yggV"/>
<dbReference type="KEGG" id="cpn:CPn_0775"/>
<dbReference type="KEGG" id="cpt:CpB0802"/>
<dbReference type="PATRIC" id="fig|115713.3.peg.852"/>
<dbReference type="eggNOG" id="COG0127">
    <property type="taxonomic scope" value="Bacteria"/>
</dbReference>
<dbReference type="HOGENOM" id="CLU_082080_0_2_0"/>
<dbReference type="OMA" id="YDPIFQP"/>
<dbReference type="OrthoDB" id="9807456at2"/>
<dbReference type="Proteomes" id="UP000000583">
    <property type="component" value="Chromosome"/>
</dbReference>
<dbReference type="Proteomes" id="UP000000801">
    <property type="component" value="Chromosome"/>
</dbReference>
<dbReference type="GO" id="GO:0005829">
    <property type="term" value="C:cytosol"/>
    <property type="evidence" value="ECO:0007669"/>
    <property type="project" value="TreeGrafter"/>
</dbReference>
<dbReference type="GO" id="GO:0035870">
    <property type="term" value="F:dITP diphosphatase activity"/>
    <property type="evidence" value="ECO:0007669"/>
    <property type="project" value="RHEA"/>
</dbReference>
<dbReference type="GO" id="GO:0036220">
    <property type="term" value="F:ITP diphosphatase activity"/>
    <property type="evidence" value="ECO:0007669"/>
    <property type="project" value="UniProtKB-EC"/>
</dbReference>
<dbReference type="GO" id="GO:0046872">
    <property type="term" value="F:metal ion binding"/>
    <property type="evidence" value="ECO:0007669"/>
    <property type="project" value="UniProtKB-KW"/>
</dbReference>
<dbReference type="GO" id="GO:0000166">
    <property type="term" value="F:nucleotide binding"/>
    <property type="evidence" value="ECO:0007669"/>
    <property type="project" value="UniProtKB-KW"/>
</dbReference>
<dbReference type="GO" id="GO:0017111">
    <property type="term" value="F:ribonucleoside triphosphate phosphatase activity"/>
    <property type="evidence" value="ECO:0007669"/>
    <property type="project" value="InterPro"/>
</dbReference>
<dbReference type="GO" id="GO:0036222">
    <property type="term" value="F:XTP diphosphatase activity"/>
    <property type="evidence" value="ECO:0007669"/>
    <property type="project" value="RHEA"/>
</dbReference>
<dbReference type="GO" id="GO:0009117">
    <property type="term" value="P:nucleotide metabolic process"/>
    <property type="evidence" value="ECO:0007669"/>
    <property type="project" value="UniProtKB-KW"/>
</dbReference>
<dbReference type="GO" id="GO:0009146">
    <property type="term" value="P:purine nucleoside triphosphate catabolic process"/>
    <property type="evidence" value="ECO:0007669"/>
    <property type="project" value="UniProtKB-UniRule"/>
</dbReference>
<dbReference type="CDD" id="cd00515">
    <property type="entry name" value="HAM1"/>
    <property type="match status" value="1"/>
</dbReference>
<dbReference type="FunFam" id="3.90.950.10:FF:000001">
    <property type="entry name" value="dITP/XTP pyrophosphatase"/>
    <property type="match status" value="1"/>
</dbReference>
<dbReference type="Gene3D" id="3.90.950.10">
    <property type="match status" value="1"/>
</dbReference>
<dbReference type="HAMAP" id="MF_01405">
    <property type="entry name" value="Non_canon_purine_NTPase"/>
    <property type="match status" value="1"/>
</dbReference>
<dbReference type="InterPro" id="IPR020922">
    <property type="entry name" value="dITP/XTP_pyrophosphatase"/>
</dbReference>
<dbReference type="InterPro" id="IPR029001">
    <property type="entry name" value="ITPase-like_fam"/>
</dbReference>
<dbReference type="InterPro" id="IPR002637">
    <property type="entry name" value="RdgB/HAM1"/>
</dbReference>
<dbReference type="NCBIfam" id="TIGR00042">
    <property type="entry name" value="RdgB/HAM1 family non-canonical purine NTP pyrophosphatase"/>
    <property type="match status" value="1"/>
</dbReference>
<dbReference type="PANTHER" id="PTHR11067:SF9">
    <property type="entry name" value="INOSINE TRIPHOSPHATE PYROPHOSPHATASE"/>
    <property type="match status" value="1"/>
</dbReference>
<dbReference type="PANTHER" id="PTHR11067">
    <property type="entry name" value="INOSINE TRIPHOSPHATE PYROPHOSPHATASE/HAM1 PROTEIN"/>
    <property type="match status" value="1"/>
</dbReference>
<dbReference type="Pfam" id="PF01725">
    <property type="entry name" value="Ham1p_like"/>
    <property type="match status" value="1"/>
</dbReference>
<dbReference type="SUPFAM" id="SSF52972">
    <property type="entry name" value="ITPase-like"/>
    <property type="match status" value="1"/>
</dbReference>